<dbReference type="EMBL" id="AF036677">
    <property type="protein sequence ID" value="AAC04776.1"/>
    <property type="molecule type" value="Genomic_DNA"/>
</dbReference>
<dbReference type="EMBL" id="AE006468">
    <property type="protein sequence ID" value="AAL21204.1"/>
    <property type="molecule type" value="Genomic_DNA"/>
</dbReference>
<dbReference type="RefSeq" id="NP_461245.1">
    <property type="nucleotide sequence ID" value="NC_003197.2"/>
</dbReference>
<dbReference type="RefSeq" id="WP_000538694.1">
    <property type="nucleotide sequence ID" value="NC_003197.2"/>
</dbReference>
<dbReference type="STRING" id="99287.STM2303"/>
<dbReference type="PaxDb" id="99287-STM2303"/>
<dbReference type="GeneID" id="1253825"/>
<dbReference type="KEGG" id="stm:STM2303"/>
<dbReference type="PATRIC" id="fig|99287.12.peg.2438"/>
<dbReference type="HOGENOM" id="CLU_131462_1_0_6"/>
<dbReference type="OMA" id="NEPMSLR"/>
<dbReference type="PhylomeDB" id="Q8ZNF0"/>
<dbReference type="BioCyc" id="SENT99287:STM2303-MONOMER"/>
<dbReference type="UniPathway" id="UPA00030"/>
<dbReference type="Proteomes" id="UP000001014">
    <property type="component" value="Chromosome"/>
</dbReference>
<dbReference type="GO" id="GO:0005886">
    <property type="term" value="C:plasma membrane"/>
    <property type="evidence" value="ECO:0000318"/>
    <property type="project" value="GO_Central"/>
</dbReference>
<dbReference type="GO" id="GO:1901505">
    <property type="term" value="F:carbohydrate derivative transmembrane transporter activity"/>
    <property type="evidence" value="ECO:0007669"/>
    <property type="project" value="InterPro"/>
</dbReference>
<dbReference type="GO" id="GO:0022857">
    <property type="term" value="F:transmembrane transporter activity"/>
    <property type="evidence" value="ECO:0000318"/>
    <property type="project" value="GO_Central"/>
</dbReference>
<dbReference type="GO" id="GO:0009245">
    <property type="term" value="P:lipid A biosynthetic process"/>
    <property type="evidence" value="ECO:0007669"/>
    <property type="project" value="UniProtKB-UniRule"/>
</dbReference>
<dbReference type="GO" id="GO:0009103">
    <property type="term" value="P:lipopolysaccharide biosynthetic process"/>
    <property type="evidence" value="ECO:0007669"/>
    <property type="project" value="UniProtKB-UniRule"/>
</dbReference>
<dbReference type="GO" id="GO:0055085">
    <property type="term" value="P:transmembrane transport"/>
    <property type="evidence" value="ECO:0000318"/>
    <property type="project" value="GO_Central"/>
</dbReference>
<dbReference type="Gene3D" id="1.10.3730.20">
    <property type="match status" value="1"/>
</dbReference>
<dbReference type="HAMAP" id="MF_00538">
    <property type="entry name" value="Flippase_ArnF"/>
    <property type="match status" value="1"/>
</dbReference>
<dbReference type="InterPro" id="IPR022832">
    <property type="entry name" value="Flippase_ArnF"/>
</dbReference>
<dbReference type="InterPro" id="IPR000390">
    <property type="entry name" value="Small_drug/metabolite_transptr"/>
</dbReference>
<dbReference type="NCBIfam" id="NF002816">
    <property type="entry name" value="PRK02971.1-2"/>
    <property type="match status" value="1"/>
</dbReference>
<dbReference type="PANTHER" id="PTHR30561:SF9">
    <property type="entry name" value="4-AMINO-4-DEOXY-L-ARABINOSE-PHOSPHOUNDECAPRENOL FLIPPASE SUBUNIT ARNF-RELATED"/>
    <property type="match status" value="1"/>
</dbReference>
<dbReference type="PANTHER" id="PTHR30561">
    <property type="entry name" value="SMR FAMILY PROTON-DEPENDENT DRUG EFFLUX TRANSPORTER SUGE"/>
    <property type="match status" value="1"/>
</dbReference>
<comment type="function">
    <text evidence="1">Translocates 4-amino-4-deoxy-L-arabinose-phosphoundecaprenol (alpha-L-Ara4N-phosphoundecaprenol) from the cytoplasmic to the periplasmic side of the inner membrane.</text>
</comment>
<comment type="pathway">
    <text>Bacterial outer membrane biogenesis; lipopolysaccharide biosynthesis.</text>
</comment>
<comment type="subunit">
    <text evidence="1">Heterodimer of ArnE and ArnF.</text>
</comment>
<comment type="subcellular location">
    <subcellularLocation>
        <location evidence="1">Cell inner membrane</location>
        <topology evidence="1">Multi-pass membrane protein</topology>
    </subcellularLocation>
</comment>
<comment type="disruption phenotype">
    <text evidence="3">No change observed, indicating that it could be not necessary for the Ara4N addition to lipid A and polymyxin resistance.</text>
</comment>
<comment type="similarity">
    <text evidence="4">Belongs to the ArnF family.</text>
</comment>
<evidence type="ECO:0000250" key="1"/>
<evidence type="ECO:0000255" key="2"/>
<evidence type="ECO:0000269" key="3">
    <source>
    </source>
</evidence>
<evidence type="ECO:0000305" key="4"/>
<gene>
    <name type="primary">arnF</name>
    <name type="ordered locus">STM2303</name>
</gene>
<feature type="chain" id="PRO_0000218157" description="Probable 4-amino-4-deoxy-L-arabinose-phosphoundecaprenol flippase subunit ArnF">
    <location>
        <begin position="1"/>
        <end position="125"/>
    </location>
</feature>
<feature type="topological domain" description="Cytoplasmic" evidence="2">
    <location>
        <begin position="1"/>
        <end position="2"/>
    </location>
</feature>
<feature type="transmembrane region" description="Helical" evidence="2">
    <location>
        <begin position="3"/>
        <end position="23"/>
    </location>
</feature>
<feature type="topological domain" description="Periplasmic" evidence="2">
    <location>
        <begin position="24"/>
        <end position="33"/>
    </location>
</feature>
<feature type="transmembrane region" description="Helical" evidence="2">
    <location>
        <begin position="34"/>
        <end position="54"/>
    </location>
</feature>
<feature type="topological domain" description="Cytoplasmic" evidence="2">
    <location>
        <begin position="55"/>
        <end position="76"/>
    </location>
</feature>
<feature type="transmembrane region" description="Helical" evidence="2">
    <location>
        <begin position="77"/>
        <end position="97"/>
    </location>
</feature>
<feature type="topological domain" description="Periplasmic" evidence="2">
    <location>
        <begin position="98"/>
        <end position="100"/>
    </location>
</feature>
<feature type="transmembrane region" description="Helical" evidence="2">
    <location>
        <begin position="101"/>
        <end position="121"/>
    </location>
</feature>
<feature type="topological domain" description="Cytoplasmic" evidence="2">
    <location>
        <begin position="122"/>
        <end position="125"/>
    </location>
</feature>
<feature type="sequence conflict" description="In Ref. 1; AAC04776." evidence="4" ref="1">
    <original>S</original>
    <variation>N</variation>
    <location>
        <position position="74"/>
    </location>
</feature>
<accession>Q8ZNF0</accession>
<accession>O52329</accession>
<reference key="1">
    <citation type="journal article" date="1998" name="Mol. Microbiol.">
        <title>PmrA-PmrB-regulated genes necessary for 4-aminoarabinose lipid A modification and polymyxin resistance.</title>
        <authorList>
            <person name="Gunn J.S."/>
            <person name="Lim K.B."/>
            <person name="Krueger J."/>
            <person name="Kim K."/>
            <person name="Guo L."/>
            <person name="Hackett M."/>
            <person name="Miller S.I."/>
        </authorList>
    </citation>
    <scope>NUCLEOTIDE SEQUENCE [GENOMIC DNA]</scope>
    <source>
        <strain>ATCC 14028s / SGSG 2262</strain>
    </source>
</reference>
<reference key="2">
    <citation type="journal article" date="2001" name="Nature">
        <title>Complete genome sequence of Salmonella enterica serovar Typhimurium LT2.</title>
        <authorList>
            <person name="McClelland M."/>
            <person name="Sanderson K.E."/>
            <person name="Spieth J."/>
            <person name="Clifton S.W."/>
            <person name="Latreille P."/>
            <person name="Courtney L."/>
            <person name="Porwollik S."/>
            <person name="Ali J."/>
            <person name="Dante M."/>
            <person name="Du F."/>
            <person name="Hou S."/>
            <person name="Layman D."/>
            <person name="Leonard S."/>
            <person name="Nguyen C."/>
            <person name="Scott K."/>
            <person name="Holmes A."/>
            <person name="Grewal N."/>
            <person name="Mulvaney E."/>
            <person name="Ryan E."/>
            <person name="Sun H."/>
            <person name="Florea L."/>
            <person name="Miller W."/>
            <person name="Stoneking T."/>
            <person name="Nhan M."/>
            <person name="Waterston R."/>
            <person name="Wilson R.K."/>
        </authorList>
    </citation>
    <scope>NUCLEOTIDE SEQUENCE [LARGE SCALE GENOMIC DNA]</scope>
    <source>
        <strain>LT2 / SGSC1412 / ATCC 700720</strain>
    </source>
</reference>
<reference key="3">
    <citation type="journal article" date="2000" name="Infect. Immun.">
        <title>Genetic and functional analysis of a PmrA-PmrB-regulated locus necessary for lipopolysaccharide modification, antimicrobial peptide resistance, and oral virulence of Salmonella enterica serovar typhimurium.</title>
        <authorList>
            <person name="Gunn J.S."/>
            <person name="Ryan S.S."/>
            <person name="Van Velkinburgh J.C."/>
            <person name="Ernst R.K."/>
            <person name="Miller S.I."/>
        </authorList>
    </citation>
    <scope>DISRUPTION PHENOTYPE</scope>
    <source>
        <strain>ATCC 14028s / SGSG 2262</strain>
    </source>
</reference>
<protein>
    <recommendedName>
        <fullName>Probable 4-amino-4-deoxy-L-arabinose-phosphoundecaprenol flippase subunit ArnF</fullName>
        <shortName>L-Ara4N-phosphoundecaprenol flippase subunit ArnF</shortName>
    </recommendedName>
    <alternativeName>
        <fullName>Undecaprenyl phosphate-aminoarabinose flippase subunit ArnF</fullName>
    </alternativeName>
</protein>
<proteinExistence type="inferred from homology"/>
<keyword id="KW-0997">Cell inner membrane</keyword>
<keyword id="KW-1003">Cell membrane</keyword>
<keyword id="KW-0441">Lipid A biosynthesis</keyword>
<keyword id="KW-0444">Lipid biosynthesis</keyword>
<keyword id="KW-0443">Lipid metabolism</keyword>
<keyword id="KW-0448">Lipopolysaccharide biosynthesis</keyword>
<keyword id="KW-0472">Membrane</keyword>
<keyword id="KW-1185">Reference proteome</keyword>
<keyword id="KW-0812">Transmembrane</keyword>
<keyword id="KW-1133">Transmembrane helix</keyword>
<keyword id="KW-0813">Transport</keyword>
<organism>
    <name type="scientific">Salmonella typhimurium (strain LT2 / SGSC1412 / ATCC 700720)</name>
    <dbReference type="NCBI Taxonomy" id="99287"/>
    <lineage>
        <taxon>Bacteria</taxon>
        <taxon>Pseudomonadati</taxon>
        <taxon>Pseudomonadota</taxon>
        <taxon>Gammaproteobacteria</taxon>
        <taxon>Enterobacterales</taxon>
        <taxon>Enterobacteriaceae</taxon>
        <taxon>Salmonella</taxon>
    </lineage>
</organism>
<sequence length="125" mass="13121">MGVMWGLISVAIASLAQLSLGFAMMRLPSIAHPLAFISGLGAFNAATLALFAGLAGYLVSVFCWQKTLHTLALSKAYALLSLSYVLVWVASMLLPGLQGAFSLKAMLGVLCIMAGVMLIFLPARS</sequence>
<name>ARNF_SALTY</name>